<evidence type="ECO:0000250" key="1"/>
<evidence type="ECO:0000250" key="2">
    <source>
        <dbReference type="UniProtKB" id="P01175"/>
    </source>
</evidence>
<evidence type="ECO:0000255" key="3"/>
<evidence type="ECO:0000305" key="4"/>
<protein>
    <recommendedName>
        <fullName>Vasotocin-neurophysin VT</fullName>
    </recommendedName>
    <component>
        <recommendedName>
            <fullName>Vasotocin</fullName>
            <shortName>VT</shortName>
        </recommendedName>
    </component>
    <component>
        <recommendedName>
            <fullName>Neurophysin VT</fullName>
        </recommendedName>
    </component>
</protein>
<name>NEU3_EPTST</name>
<keyword id="KW-0027">Amidation</keyword>
<keyword id="KW-0165">Cleavage on pair of basic residues</keyword>
<keyword id="KW-1015">Disulfide bond</keyword>
<keyword id="KW-0372">Hormone</keyword>
<keyword id="KW-0964">Secreted</keyword>
<keyword id="KW-0732">Signal</keyword>
<reference key="1">
    <citation type="journal article" date="1992" name="Proc. Natl. Acad. Sci. U.S.A.">
        <title>Presence of a member of the Tc1-like transposon family from nematodes and Drosophila within the vasotocin gene of a primitive vertebrate, the Pacific hagfish Eptatretus stouti.</title>
        <authorList>
            <person name="Heierhorst J."/>
            <person name="Lederis K."/>
            <person name="Richter D."/>
        </authorList>
    </citation>
    <scope>NUCLEOTIDE SEQUENCE [GENOMIC DNA / MRNA]</scope>
</reference>
<proteinExistence type="evidence at transcript level"/>
<feature type="signal peptide" evidence="3">
    <location>
        <begin position="1"/>
        <end position="22"/>
    </location>
</feature>
<feature type="peptide" id="PRO_0000020552" description="Vasotocin">
    <location>
        <begin position="23"/>
        <end position="31"/>
    </location>
</feature>
<feature type="chain" id="PRO_0000020553" description="Neurophysin VT">
    <location>
        <begin position="35"/>
        <end position="161"/>
    </location>
</feature>
<feature type="modified residue" description="Glycine amide" evidence="1">
    <location>
        <position position="31"/>
    </location>
</feature>
<feature type="disulfide bond" evidence="2">
    <location>
        <begin position="23"/>
        <end position="28"/>
    </location>
</feature>
<feature type="disulfide bond" evidence="2">
    <location>
        <begin position="43"/>
        <end position="91"/>
    </location>
</feature>
<feature type="disulfide bond" evidence="2">
    <location>
        <begin position="46"/>
        <end position="58"/>
    </location>
</feature>
<feature type="disulfide bond" evidence="2">
    <location>
        <begin position="52"/>
        <end position="81"/>
    </location>
</feature>
<feature type="disulfide bond" evidence="2">
    <location>
        <begin position="59"/>
        <end position="71"/>
    </location>
</feature>
<feature type="disulfide bond" evidence="2">
    <location>
        <begin position="99"/>
        <end position="111"/>
    </location>
</feature>
<feature type="disulfide bond" evidence="2">
    <location>
        <begin position="105"/>
        <end position="123"/>
    </location>
</feature>
<feature type="disulfide bond" evidence="2">
    <location>
        <begin position="112"/>
        <end position="117"/>
    </location>
</feature>
<dbReference type="EMBL" id="M93037">
    <property type="status" value="NOT_ANNOTATED_CDS"/>
    <property type="molecule type" value="mRNA"/>
</dbReference>
<dbReference type="EMBL" id="M93040">
    <property type="status" value="NOT_ANNOTATED_CDS"/>
    <property type="molecule type" value="Genomic_DNA"/>
</dbReference>
<dbReference type="PIR" id="A46189">
    <property type="entry name" value="A46189"/>
</dbReference>
<dbReference type="SMR" id="Q7M428"/>
<dbReference type="GO" id="GO:0005615">
    <property type="term" value="C:extracellular space"/>
    <property type="evidence" value="ECO:0007669"/>
    <property type="project" value="TreeGrafter"/>
</dbReference>
<dbReference type="GO" id="GO:0030141">
    <property type="term" value="C:secretory granule"/>
    <property type="evidence" value="ECO:0007669"/>
    <property type="project" value="TreeGrafter"/>
</dbReference>
<dbReference type="GO" id="GO:0005185">
    <property type="term" value="F:neurohypophyseal hormone activity"/>
    <property type="evidence" value="ECO:0007669"/>
    <property type="project" value="InterPro"/>
</dbReference>
<dbReference type="Gene3D" id="2.60.9.10">
    <property type="entry name" value="Neurohypophysial hormone domain"/>
    <property type="match status" value="1"/>
</dbReference>
<dbReference type="InterPro" id="IPR000981">
    <property type="entry name" value="Neurhyp_horm"/>
</dbReference>
<dbReference type="InterPro" id="IPR036387">
    <property type="entry name" value="Neurhyp_horm_dom_sf"/>
</dbReference>
<dbReference type="InterPro" id="IPR022423">
    <property type="entry name" value="Neurohypophysial_hormone_CS"/>
</dbReference>
<dbReference type="PANTHER" id="PTHR11681:SF5">
    <property type="entry name" value="ISOTOCIN"/>
    <property type="match status" value="1"/>
</dbReference>
<dbReference type="PANTHER" id="PTHR11681">
    <property type="entry name" value="NEUROPHYSIN"/>
    <property type="match status" value="1"/>
</dbReference>
<dbReference type="Pfam" id="PF00220">
    <property type="entry name" value="Hormone_4"/>
    <property type="match status" value="1"/>
</dbReference>
<dbReference type="Pfam" id="PF00184">
    <property type="entry name" value="Hormone_5"/>
    <property type="match status" value="1"/>
</dbReference>
<dbReference type="PIRSF" id="PIRSF001815">
    <property type="entry name" value="Nonapeptide_hormone_precursor"/>
    <property type="match status" value="1"/>
</dbReference>
<dbReference type="PRINTS" id="PR00831">
    <property type="entry name" value="NEUROPHYSIN"/>
</dbReference>
<dbReference type="SMART" id="SM00003">
    <property type="entry name" value="NH"/>
    <property type="match status" value="1"/>
</dbReference>
<dbReference type="SUPFAM" id="SSF49606">
    <property type="entry name" value="Neurophysin II"/>
    <property type="match status" value="1"/>
</dbReference>
<dbReference type="PROSITE" id="PS00264">
    <property type="entry name" value="NEUROHYPOPHYS_HORM"/>
    <property type="match status" value="1"/>
</dbReference>
<sequence length="161" mass="15812">MSAMGWTLLAAALLAISAQSNGCYIQNCPRGGKRAVETELHSCAACGLGGQCVGPSICCGGLLGGGRGGGCIVGGPLSAPCKRENLHPEPCRPGGGSSCGLEGICAAPGICCTDVTCSIDATCDDVTEKAGVTFSGATGGLANPTGDLLRKVLLLANADLE</sequence>
<comment type="function">
    <text>Vasotocin is an antidiuretic hormone.</text>
</comment>
<comment type="subcellular location">
    <subcellularLocation>
        <location>Secreted</location>
    </subcellularLocation>
</comment>
<comment type="similarity">
    <text evidence="4">Belongs to the vasopressin/oxytocin family.</text>
</comment>
<organism>
    <name type="scientific">Eptatretus stoutii</name>
    <name type="common">Pacific hagfish</name>
    <dbReference type="NCBI Taxonomy" id="7765"/>
    <lineage>
        <taxon>Eukaryota</taxon>
        <taxon>Metazoa</taxon>
        <taxon>Chordata</taxon>
        <taxon>Craniata</taxon>
        <taxon>Vertebrata</taxon>
        <taxon>Cyclostomata</taxon>
        <taxon>Myxini</taxon>
        <taxon>Myxiniformes</taxon>
        <taxon>Myxinidae</taxon>
        <taxon>Eptatretinae</taxon>
        <taxon>Eptatretus</taxon>
    </lineage>
</organism>
<accession>Q7M428</accession>